<comment type="function">
    <text evidence="1">Plays a role for multiplication of the virus in different cell types.</text>
</comment>
<comment type="similarity">
    <text evidence="2">Belongs to the poxviridae C7 protein family.</text>
</comment>
<sequence length="185" mass="21751">MGITHELDIFLVSEDIAMKHVELHKGNSYGCVLNIKSSCRKQMKIIFVLKPDWTEIDSIKPIQMEADGIYIDVTIIKQSFYEVIYCSNFTIYGDSVINIFSDIDRCTKEKYPIININIDKKKYEIIESGYTYIYIQSPIDKEDKLTYMRDDYVDEYNSSDDDCIDYYDCDYDDDDNNDAEDEDEE</sequence>
<accession>P23333</accession>
<gene>
    <name type="ORF">SWF8A</name>
</gene>
<reference key="1">
    <citation type="journal article" date="1991" name="Virology">
        <title>Identification and nucleotide sequence of the thymidine kinase gene of swinepox virus.</title>
        <authorList>
            <person name="Schnitzlein W.M."/>
            <person name="Tripathy D.N."/>
        </authorList>
    </citation>
    <scope>NUCLEOTIDE SEQUENCE [GENOMIC DNA]</scope>
</reference>
<evidence type="ECO:0000250" key="1"/>
<evidence type="ECO:0000305" key="2"/>
<proteinExistence type="inferred from homology"/>
<organism>
    <name type="scientific">Swinepox virus (strain Kasza)</name>
    <name type="common">SWPV</name>
    <dbReference type="NCBI Taxonomy" id="10277"/>
    <lineage>
        <taxon>Viruses</taxon>
        <taxon>Varidnaviria</taxon>
        <taxon>Bamfordvirae</taxon>
        <taxon>Nucleocytoviricota</taxon>
        <taxon>Pokkesviricetes</taxon>
        <taxon>Chitovirales</taxon>
        <taxon>Poxviridae</taxon>
        <taxon>Chordopoxvirinae</taxon>
        <taxon>Suipoxvirus</taxon>
        <taxon>Swinepox virus</taxon>
    </lineage>
</organism>
<protein>
    <recommendedName>
        <fullName>Probable host range protein 2</fullName>
    </recommendedName>
</protein>
<feature type="chain" id="PRO_0000099403" description="Probable host range protein 2">
    <location>
        <begin position="1"/>
        <end position="185"/>
    </location>
</feature>
<dbReference type="EMBL" id="M59931">
    <property type="protein sequence ID" value="AAA47892.1"/>
    <property type="molecule type" value="Genomic_DNA"/>
</dbReference>
<dbReference type="PIR" id="C37949">
    <property type="entry name" value="WZVZSW"/>
</dbReference>
<dbReference type="SMR" id="P23333"/>
<dbReference type="KEGG" id="vg:932481"/>
<dbReference type="GO" id="GO:0016032">
    <property type="term" value="P:viral process"/>
    <property type="evidence" value="ECO:0007669"/>
    <property type="project" value="InterPro"/>
</dbReference>
<dbReference type="InterPro" id="IPR004967">
    <property type="entry name" value="Poxvirus_C7/F8A"/>
</dbReference>
<dbReference type="Pfam" id="PF03287">
    <property type="entry name" value="Pox_C7_F8A"/>
    <property type="match status" value="1"/>
</dbReference>
<dbReference type="PIRSF" id="PIRSF003779">
    <property type="entry name" value="VAC_C7L"/>
    <property type="match status" value="1"/>
</dbReference>
<name>VHR2_SWPVK</name>
<organismHost>
    <name type="scientific">Sus scrofa</name>
    <name type="common">Pig</name>
    <dbReference type="NCBI Taxonomy" id="9823"/>
</organismHost>
<keyword id="KW-0244">Early protein</keyword>